<evidence type="ECO:0000255" key="1">
    <source>
        <dbReference type="HAMAP-Rule" id="MF_00332"/>
    </source>
</evidence>
<evidence type="ECO:0000256" key="2">
    <source>
        <dbReference type="SAM" id="MobiDB-lite"/>
    </source>
</evidence>
<gene>
    <name evidence="1" type="primary">dnaK</name>
    <name type="ordered locus">Bxeno_A0500</name>
    <name type="ORF">Bxe_A3961</name>
</gene>
<accession>Q145F1</accession>
<keyword id="KW-0067">ATP-binding</keyword>
<keyword id="KW-0143">Chaperone</keyword>
<keyword id="KW-0547">Nucleotide-binding</keyword>
<keyword id="KW-0597">Phosphoprotein</keyword>
<keyword id="KW-1185">Reference proteome</keyword>
<keyword id="KW-0346">Stress response</keyword>
<proteinExistence type="inferred from homology"/>
<feature type="chain" id="PRO_1000059527" description="Chaperone protein DnaK">
    <location>
        <begin position="1"/>
        <end position="653"/>
    </location>
</feature>
<feature type="region of interest" description="Disordered" evidence="2">
    <location>
        <begin position="615"/>
        <end position="653"/>
    </location>
</feature>
<feature type="compositionally biased region" description="Gly residues" evidence="2">
    <location>
        <begin position="623"/>
        <end position="632"/>
    </location>
</feature>
<feature type="modified residue" description="Phosphothreonine; by autocatalysis" evidence="1">
    <location>
        <position position="200"/>
    </location>
</feature>
<comment type="function">
    <text evidence="1">Acts as a chaperone.</text>
</comment>
<comment type="induction">
    <text evidence="1">By stress conditions e.g. heat shock.</text>
</comment>
<comment type="similarity">
    <text evidence="1">Belongs to the heat shock protein 70 family.</text>
</comment>
<organism>
    <name type="scientific">Paraburkholderia xenovorans (strain LB400)</name>
    <dbReference type="NCBI Taxonomy" id="266265"/>
    <lineage>
        <taxon>Bacteria</taxon>
        <taxon>Pseudomonadati</taxon>
        <taxon>Pseudomonadota</taxon>
        <taxon>Betaproteobacteria</taxon>
        <taxon>Burkholderiales</taxon>
        <taxon>Burkholderiaceae</taxon>
        <taxon>Paraburkholderia</taxon>
    </lineage>
</organism>
<name>DNAK_PARXL</name>
<dbReference type="EMBL" id="CP000270">
    <property type="protein sequence ID" value="ABE29038.1"/>
    <property type="molecule type" value="Genomic_DNA"/>
</dbReference>
<dbReference type="RefSeq" id="WP_011486859.1">
    <property type="nucleotide sequence ID" value="NC_007951.1"/>
</dbReference>
<dbReference type="SMR" id="Q145F1"/>
<dbReference type="STRING" id="266265.Bxe_A3961"/>
<dbReference type="KEGG" id="bxb:DR64_1637"/>
<dbReference type="KEGG" id="bxe:Bxe_A3961"/>
<dbReference type="PATRIC" id="fig|266265.5.peg.532"/>
<dbReference type="eggNOG" id="COG0443">
    <property type="taxonomic scope" value="Bacteria"/>
</dbReference>
<dbReference type="OrthoDB" id="9766019at2"/>
<dbReference type="Proteomes" id="UP000001817">
    <property type="component" value="Chromosome 1"/>
</dbReference>
<dbReference type="GO" id="GO:0005524">
    <property type="term" value="F:ATP binding"/>
    <property type="evidence" value="ECO:0007669"/>
    <property type="project" value="UniProtKB-UniRule"/>
</dbReference>
<dbReference type="GO" id="GO:0140662">
    <property type="term" value="F:ATP-dependent protein folding chaperone"/>
    <property type="evidence" value="ECO:0007669"/>
    <property type="project" value="InterPro"/>
</dbReference>
<dbReference type="GO" id="GO:0051082">
    <property type="term" value="F:unfolded protein binding"/>
    <property type="evidence" value="ECO:0007669"/>
    <property type="project" value="InterPro"/>
</dbReference>
<dbReference type="CDD" id="cd10234">
    <property type="entry name" value="ASKHA_NBD_HSP70_DnaK-like"/>
    <property type="match status" value="1"/>
</dbReference>
<dbReference type="FunFam" id="2.60.34.10:FF:000014">
    <property type="entry name" value="Chaperone protein DnaK HSP70"/>
    <property type="match status" value="1"/>
</dbReference>
<dbReference type="FunFam" id="1.20.1270.10:FF:000001">
    <property type="entry name" value="Molecular chaperone DnaK"/>
    <property type="match status" value="1"/>
</dbReference>
<dbReference type="FunFam" id="3.30.420.40:FF:000004">
    <property type="entry name" value="Molecular chaperone DnaK"/>
    <property type="match status" value="1"/>
</dbReference>
<dbReference type="FunFam" id="3.90.640.10:FF:000003">
    <property type="entry name" value="Molecular chaperone DnaK"/>
    <property type="match status" value="1"/>
</dbReference>
<dbReference type="Gene3D" id="1.20.1270.10">
    <property type="match status" value="1"/>
</dbReference>
<dbReference type="Gene3D" id="3.30.420.40">
    <property type="match status" value="2"/>
</dbReference>
<dbReference type="Gene3D" id="3.90.640.10">
    <property type="entry name" value="Actin, Chain A, domain 4"/>
    <property type="match status" value="1"/>
</dbReference>
<dbReference type="Gene3D" id="2.60.34.10">
    <property type="entry name" value="Substrate Binding Domain Of DNAk, Chain A, domain 1"/>
    <property type="match status" value="1"/>
</dbReference>
<dbReference type="HAMAP" id="MF_00332">
    <property type="entry name" value="DnaK"/>
    <property type="match status" value="1"/>
</dbReference>
<dbReference type="InterPro" id="IPR043129">
    <property type="entry name" value="ATPase_NBD"/>
</dbReference>
<dbReference type="InterPro" id="IPR012725">
    <property type="entry name" value="Chaperone_DnaK"/>
</dbReference>
<dbReference type="InterPro" id="IPR018181">
    <property type="entry name" value="Heat_shock_70_CS"/>
</dbReference>
<dbReference type="InterPro" id="IPR029048">
    <property type="entry name" value="HSP70_C_sf"/>
</dbReference>
<dbReference type="InterPro" id="IPR029047">
    <property type="entry name" value="HSP70_peptide-bd_sf"/>
</dbReference>
<dbReference type="InterPro" id="IPR013126">
    <property type="entry name" value="Hsp_70_fam"/>
</dbReference>
<dbReference type="NCBIfam" id="NF001413">
    <property type="entry name" value="PRK00290.1"/>
    <property type="match status" value="1"/>
</dbReference>
<dbReference type="NCBIfam" id="NF003520">
    <property type="entry name" value="PRK05183.1"/>
    <property type="match status" value="1"/>
</dbReference>
<dbReference type="NCBIfam" id="TIGR02350">
    <property type="entry name" value="prok_dnaK"/>
    <property type="match status" value="1"/>
</dbReference>
<dbReference type="PANTHER" id="PTHR19375">
    <property type="entry name" value="HEAT SHOCK PROTEIN 70KDA"/>
    <property type="match status" value="1"/>
</dbReference>
<dbReference type="Pfam" id="PF00012">
    <property type="entry name" value="HSP70"/>
    <property type="match status" value="1"/>
</dbReference>
<dbReference type="PRINTS" id="PR00301">
    <property type="entry name" value="HEATSHOCK70"/>
</dbReference>
<dbReference type="SUPFAM" id="SSF53067">
    <property type="entry name" value="Actin-like ATPase domain"/>
    <property type="match status" value="2"/>
</dbReference>
<dbReference type="SUPFAM" id="SSF100934">
    <property type="entry name" value="Heat shock protein 70kD (HSP70), C-terminal subdomain"/>
    <property type="match status" value="1"/>
</dbReference>
<dbReference type="SUPFAM" id="SSF100920">
    <property type="entry name" value="Heat shock protein 70kD (HSP70), peptide-binding domain"/>
    <property type="match status" value="1"/>
</dbReference>
<dbReference type="PROSITE" id="PS00297">
    <property type="entry name" value="HSP70_1"/>
    <property type="match status" value="1"/>
</dbReference>
<dbReference type="PROSITE" id="PS00329">
    <property type="entry name" value="HSP70_2"/>
    <property type="match status" value="1"/>
</dbReference>
<dbReference type="PROSITE" id="PS01036">
    <property type="entry name" value="HSP70_3"/>
    <property type="match status" value="1"/>
</dbReference>
<reference key="1">
    <citation type="journal article" date="2006" name="Proc. Natl. Acad. Sci. U.S.A.">
        <title>Burkholderia xenovorans LB400 harbors a multi-replicon, 9.73-Mbp genome shaped for versatility.</title>
        <authorList>
            <person name="Chain P.S.G."/>
            <person name="Denef V.J."/>
            <person name="Konstantinidis K.T."/>
            <person name="Vergez L.M."/>
            <person name="Agullo L."/>
            <person name="Reyes V.L."/>
            <person name="Hauser L."/>
            <person name="Cordova M."/>
            <person name="Gomez L."/>
            <person name="Gonzalez M."/>
            <person name="Land M."/>
            <person name="Lao V."/>
            <person name="Larimer F."/>
            <person name="LiPuma J.J."/>
            <person name="Mahenthiralingam E."/>
            <person name="Malfatti S.A."/>
            <person name="Marx C.J."/>
            <person name="Parnell J.J."/>
            <person name="Ramette A."/>
            <person name="Richardson P."/>
            <person name="Seeger M."/>
            <person name="Smith D."/>
            <person name="Spilker T."/>
            <person name="Sul W.J."/>
            <person name="Tsoi T.V."/>
            <person name="Ulrich L.E."/>
            <person name="Zhulin I.B."/>
            <person name="Tiedje J.M."/>
        </authorList>
    </citation>
    <scope>NUCLEOTIDE SEQUENCE [LARGE SCALE GENOMIC DNA]</scope>
    <source>
        <strain>LB400</strain>
    </source>
</reference>
<protein>
    <recommendedName>
        <fullName evidence="1">Chaperone protein DnaK</fullName>
    </recommendedName>
    <alternativeName>
        <fullName evidence="1">HSP70</fullName>
    </alternativeName>
    <alternativeName>
        <fullName evidence="1">Heat shock 70 kDa protein</fullName>
    </alternativeName>
    <alternativeName>
        <fullName evidence="1">Heat shock protein 70</fullName>
    </alternativeName>
</protein>
<sequence>MGKIIGIDLGTTNSCVAIMEGNSVKVIENSEGARTTPSIIAYMEDGEILVGAPAKRQSVTNPKNTLYAVKRLIGRRFEEKEVQKDIGLMPYKIIKADNGDAWVEVRDQKLAPPQISAEVLRKMKKTAEDYLGEPVTEAVITVPAYFNDSQRQATKDAGRIAGLEVKRIINEPTAAALAFGLDKNEKGDRKIAVYDLGGGTFDVSIIEIADVDGEKQFEVLSTNGDTFLGGEDFDQRIIDYIIGEFKKEQGVDLSKDVLALQRLKESAEKAKIELSSSQQTEINLPYITADASGPKHLNLKITRAKLEALVEELIERTIEPCRVAIKDAGVKVGEIDDVILVGGMTRMPKVQEKVKEFFGKDPRRDVNPDEAVAVGAAIQGQVLSGDRKDVLLLDVTPLSLGIETLGGVMTKMINKNTTIPTKHSQVYSTADDNQGAVTIKVFQGEREMAAGNKLLGEFNLEGIPPAPRGTPQIEVSFDIDANGILHVGAKDKATGKENRITIKANSGLSEAEIEKMVKDAEANAEEDHKLRELADARNQGDALVHSTKKALTEYGDKLEAGEKEKIESALKDLEETLKSGSSDKAAIEAKIEVVATASQKMGEKMYADMQAAQGAEAAAAGAAGAGGAGASAGGASQQQDDVVDAEFKEVKKD</sequence>